<comment type="subunit">
    <text evidence="2">Interacts with hemolin.</text>
</comment>
<comment type="similarity">
    <text evidence="4">Belongs to the yippee family.</text>
</comment>
<feature type="chain" id="PRO_0000212379" description="Protein yippee">
    <location>
        <begin position="1"/>
        <end position="121"/>
    </location>
</feature>
<feature type="domain" description="Yippee" evidence="1">
    <location>
        <begin position="13"/>
        <end position="110"/>
    </location>
</feature>
<feature type="binding site" evidence="1">
    <location>
        <position position="17"/>
    </location>
    <ligand>
        <name>Zn(2+)</name>
        <dbReference type="ChEBI" id="CHEBI:29105"/>
    </ligand>
</feature>
<feature type="binding site" evidence="1">
    <location>
        <position position="20"/>
    </location>
    <ligand>
        <name>Zn(2+)</name>
        <dbReference type="ChEBI" id="CHEBI:29105"/>
    </ligand>
</feature>
<feature type="binding site" evidence="1">
    <location>
        <position position="73"/>
    </location>
    <ligand>
        <name>Zn(2+)</name>
        <dbReference type="ChEBI" id="CHEBI:29105"/>
    </ligand>
</feature>
<feature type="binding site" evidence="1">
    <location>
        <position position="76"/>
    </location>
    <ligand>
        <name>Zn(2+)</name>
        <dbReference type="ChEBI" id="CHEBI:29105"/>
    </ligand>
</feature>
<sequence length="121" mass="13743">MGRIFLEHLGGLKLFNCAQCHTNLTNRSQLISTRFTGATGRAYLFKRVVNLTFSNIQERVMLTGRHMVRDVMCKNCGAKLGWMYEFATEESQKYKEGRVILEYALITEAEGFPSEAATTSH</sequence>
<gene>
    <name evidence="5" type="primary">Ype</name>
    <name evidence="3" type="synonym">Yippee</name>
    <name evidence="5" type="ORF">CG1989</name>
</gene>
<keyword id="KW-0479">Metal-binding</keyword>
<keyword id="KW-1185">Reference proteome</keyword>
<keyword id="KW-0862">Zinc</keyword>
<accession>Q9XZF0</accession>
<protein>
    <recommendedName>
        <fullName evidence="3">Protein yippee</fullName>
    </recommendedName>
</protein>
<dbReference type="EMBL" id="AF172939">
    <property type="protein sequence ID" value="AAD47881.1"/>
    <property type="molecule type" value="mRNA"/>
</dbReference>
<dbReference type="EMBL" id="AF139189">
    <property type="protein sequence ID" value="AAD28537.1"/>
    <property type="molecule type" value="Genomic_DNA"/>
</dbReference>
<dbReference type="EMBL" id="AE014298">
    <property type="protein sequence ID" value="AAF48266.1"/>
    <property type="molecule type" value="Genomic_DNA"/>
</dbReference>
<dbReference type="RefSeq" id="NP_572882.1">
    <property type="nucleotide sequence ID" value="NM_132654.4"/>
</dbReference>
<dbReference type="SMR" id="Q9XZF0"/>
<dbReference type="BioGRID" id="58675">
    <property type="interactions" value="7"/>
</dbReference>
<dbReference type="DIP" id="DIP-22333N"/>
<dbReference type="FunCoup" id="Q9XZF0">
    <property type="interactions" value="536"/>
</dbReference>
<dbReference type="IntAct" id="Q9XZF0">
    <property type="interactions" value="12"/>
</dbReference>
<dbReference type="STRING" id="7227.FBpp0073620"/>
<dbReference type="PaxDb" id="7227-FBpp0073620"/>
<dbReference type="DNASU" id="32295"/>
<dbReference type="EnsemblMetazoa" id="FBtr0073789">
    <property type="protein sequence ID" value="FBpp0073620"/>
    <property type="gene ID" value="FBgn0026749"/>
</dbReference>
<dbReference type="GeneID" id="32295"/>
<dbReference type="KEGG" id="dme:Dmel_CG1989"/>
<dbReference type="UCSC" id="CG1989-RA">
    <property type="organism name" value="d. melanogaster"/>
</dbReference>
<dbReference type="AGR" id="FB:FBgn0288857"/>
<dbReference type="CTD" id="32295"/>
<dbReference type="FlyBase" id="FBgn0288857">
    <property type="gene designation" value="Ype"/>
</dbReference>
<dbReference type="VEuPathDB" id="VectorBase:FBgn0026749"/>
<dbReference type="eggNOG" id="KOG3399">
    <property type="taxonomic scope" value="Eukaryota"/>
</dbReference>
<dbReference type="GeneTree" id="ENSGT00940000154800"/>
<dbReference type="HOGENOM" id="CLU_043857_1_1_1"/>
<dbReference type="InParanoid" id="Q9XZF0"/>
<dbReference type="OMA" id="YNCAACE"/>
<dbReference type="OrthoDB" id="6407410at2759"/>
<dbReference type="PhylomeDB" id="Q9XZF0"/>
<dbReference type="Reactome" id="R-DME-6798695">
    <property type="pathway name" value="Neutrophil degranulation"/>
</dbReference>
<dbReference type="BioGRID-ORCS" id="32295">
    <property type="hits" value="0 hits in 3 CRISPR screens"/>
</dbReference>
<dbReference type="GenomeRNAi" id="32295"/>
<dbReference type="PRO" id="PR:Q9XZF0"/>
<dbReference type="Proteomes" id="UP000000803">
    <property type="component" value="Chromosome X"/>
</dbReference>
<dbReference type="Bgee" id="FBgn0026749">
    <property type="expression patterns" value="Expressed in T neuron T4a (Drosophila) in embryonic/larval optic lobe (Drosophila) and 198 other cell types or tissues"/>
</dbReference>
<dbReference type="ExpressionAtlas" id="Q9XZF0">
    <property type="expression patterns" value="baseline and differential"/>
</dbReference>
<dbReference type="GO" id="GO:0000151">
    <property type="term" value="C:ubiquitin ligase complex"/>
    <property type="evidence" value="ECO:0000318"/>
    <property type="project" value="GO_Central"/>
</dbReference>
<dbReference type="GO" id="GO:0046872">
    <property type="term" value="F:metal ion binding"/>
    <property type="evidence" value="ECO:0000303"/>
    <property type="project" value="UniProtKB"/>
</dbReference>
<dbReference type="GO" id="GO:0048085">
    <property type="term" value="P:adult chitin-containing cuticle pigmentation"/>
    <property type="evidence" value="ECO:0000315"/>
    <property type="project" value="FlyBase"/>
</dbReference>
<dbReference type="GO" id="GO:0008407">
    <property type="term" value="P:chaeta morphogenesis"/>
    <property type="evidence" value="ECO:0000315"/>
    <property type="project" value="FlyBase"/>
</dbReference>
<dbReference type="GO" id="GO:0007476">
    <property type="term" value="P:imaginal disc-derived wing morphogenesis"/>
    <property type="evidence" value="ECO:0000315"/>
    <property type="project" value="FlyBase"/>
</dbReference>
<dbReference type="InterPro" id="IPR034751">
    <property type="entry name" value="Yippee"/>
</dbReference>
<dbReference type="InterPro" id="IPR004910">
    <property type="entry name" value="Yippee/Mis18/Cereblon"/>
</dbReference>
<dbReference type="InterPro" id="IPR039058">
    <property type="entry name" value="Yippee_fam"/>
</dbReference>
<dbReference type="PANTHER" id="PTHR13848">
    <property type="entry name" value="PROTEIN YIPPEE-LIKE CG15309-RELATED"/>
    <property type="match status" value="1"/>
</dbReference>
<dbReference type="Pfam" id="PF03226">
    <property type="entry name" value="Yippee-Mis18"/>
    <property type="match status" value="1"/>
</dbReference>
<dbReference type="PROSITE" id="PS51792">
    <property type="entry name" value="YIPPEE"/>
    <property type="match status" value="1"/>
</dbReference>
<evidence type="ECO:0000255" key="1">
    <source>
        <dbReference type="PROSITE-ProRule" id="PRU01128"/>
    </source>
</evidence>
<evidence type="ECO:0000269" key="2">
    <source>
    </source>
</evidence>
<evidence type="ECO:0000303" key="3">
    <source>
    </source>
</evidence>
<evidence type="ECO:0000305" key="4"/>
<evidence type="ECO:0000312" key="5">
    <source>
        <dbReference type="FlyBase" id="FBgn0288857"/>
    </source>
</evidence>
<name>YIPP_DROME</name>
<organism>
    <name type="scientific">Drosophila melanogaster</name>
    <name type="common">Fruit fly</name>
    <dbReference type="NCBI Taxonomy" id="7227"/>
    <lineage>
        <taxon>Eukaryota</taxon>
        <taxon>Metazoa</taxon>
        <taxon>Ecdysozoa</taxon>
        <taxon>Arthropoda</taxon>
        <taxon>Hexapoda</taxon>
        <taxon>Insecta</taxon>
        <taxon>Pterygota</taxon>
        <taxon>Neoptera</taxon>
        <taxon>Endopterygota</taxon>
        <taxon>Diptera</taxon>
        <taxon>Brachycera</taxon>
        <taxon>Muscomorpha</taxon>
        <taxon>Ephydroidea</taxon>
        <taxon>Drosophilidae</taxon>
        <taxon>Drosophila</taxon>
        <taxon>Sophophora</taxon>
    </lineage>
</organism>
<proteinExistence type="evidence at protein level"/>
<reference key="1">
    <citation type="journal article" date="2001" name="Insect Mol. Biol.">
        <title>The Drosophila gene Yippee reveals a novel family of putative zinc binding proteins highly conserved among eukaryotes.</title>
        <authorList>
            <person name="Roxstroem-Lindquist K."/>
            <person name="Faye I."/>
        </authorList>
    </citation>
    <scope>NUCLEOTIDE SEQUENCE [GENOMIC DNA / MRNA]</scope>
    <scope>INTERACTION WITH HEMOLIN</scope>
</reference>
<reference key="2">
    <citation type="journal article" date="2000" name="Science">
        <title>The genome sequence of Drosophila melanogaster.</title>
        <authorList>
            <person name="Adams M.D."/>
            <person name="Celniker S.E."/>
            <person name="Holt R.A."/>
            <person name="Evans C.A."/>
            <person name="Gocayne J.D."/>
            <person name="Amanatides P.G."/>
            <person name="Scherer S.E."/>
            <person name="Li P.W."/>
            <person name="Hoskins R.A."/>
            <person name="Galle R.F."/>
            <person name="George R.A."/>
            <person name="Lewis S.E."/>
            <person name="Richards S."/>
            <person name="Ashburner M."/>
            <person name="Henderson S.N."/>
            <person name="Sutton G.G."/>
            <person name="Wortman J.R."/>
            <person name="Yandell M.D."/>
            <person name="Zhang Q."/>
            <person name="Chen L.X."/>
            <person name="Brandon R.C."/>
            <person name="Rogers Y.-H.C."/>
            <person name="Blazej R.G."/>
            <person name="Champe M."/>
            <person name="Pfeiffer B.D."/>
            <person name="Wan K.H."/>
            <person name="Doyle C."/>
            <person name="Baxter E.G."/>
            <person name="Helt G."/>
            <person name="Nelson C.R."/>
            <person name="Miklos G.L.G."/>
            <person name="Abril J.F."/>
            <person name="Agbayani A."/>
            <person name="An H.-J."/>
            <person name="Andrews-Pfannkoch C."/>
            <person name="Baldwin D."/>
            <person name="Ballew R.M."/>
            <person name="Basu A."/>
            <person name="Baxendale J."/>
            <person name="Bayraktaroglu L."/>
            <person name="Beasley E.M."/>
            <person name="Beeson K.Y."/>
            <person name="Benos P.V."/>
            <person name="Berman B.P."/>
            <person name="Bhandari D."/>
            <person name="Bolshakov S."/>
            <person name="Borkova D."/>
            <person name="Botchan M.R."/>
            <person name="Bouck J."/>
            <person name="Brokstein P."/>
            <person name="Brottier P."/>
            <person name="Burtis K.C."/>
            <person name="Busam D.A."/>
            <person name="Butler H."/>
            <person name="Cadieu E."/>
            <person name="Center A."/>
            <person name="Chandra I."/>
            <person name="Cherry J.M."/>
            <person name="Cawley S."/>
            <person name="Dahlke C."/>
            <person name="Davenport L.B."/>
            <person name="Davies P."/>
            <person name="de Pablos B."/>
            <person name="Delcher A."/>
            <person name="Deng Z."/>
            <person name="Mays A.D."/>
            <person name="Dew I."/>
            <person name="Dietz S.M."/>
            <person name="Dodson K."/>
            <person name="Doup L.E."/>
            <person name="Downes M."/>
            <person name="Dugan-Rocha S."/>
            <person name="Dunkov B.C."/>
            <person name="Dunn P."/>
            <person name="Durbin K.J."/>
            <person name="Evangelista C.C."/>
            <person name="Ferraz C."/>
            <person name="Ferriera S."/>
            <person name="Fleischmann W."/>
            <person name="Fosler C."/>
            <person name="Gabrielian A.E."/>
            <person name="Garg N.S."/>
            <person name="Gelbart W.M."/>
            <person name="Glasser K."/>
            <person name="Glodek A."/>
            <person name="Gong F."/>
            <person name="Gorrell J.H."/>
            <person name="Gu Z."/>
            <person name="Guan P."/>
            <person name="Harris M."/>
            <person name="Harris N.L."/>
            <person name="Harvey D.A."/>
            <person name="Heiman T.J."/>
            <person name="Hernandez J.R."/>
            <person name="Houck J."/>
            <person name="Hostin D."/>
            <person name="Houston K.A."/>
            <person name="Howland T.J."/>
            <person name="Wei M.-H."/>
            <person name="Ibegwam C."/>
            <person name="Jalali M."/>
            <person name="Kalush F."/>
            <person name="Karpen G.H."/>
            <person name="Ke Z."/>
            <person name="Kennison J.A."/>
            <person name="Ketchum K.A."/>
            <person name="Kimmel B.E."/>
            <person name="Kodira C.D."/>
            <person name="Kraft C.L."/>
            <person name="Kravitz S."/>
            <person name="Kulp D."/>
            <person name="Lai Z."/>
            <person name="Lasko P."/>
            <person name="Lei Y."/>
            <person name="Levitsky A.A."/>
            <person name="Li J.H."/>
            <person name="Li Z."/>
            <person name="Liang Y."/>
            <person name="Lin X."/>
            <person name="Liu X."/>
            <person name="Mattei B."/>
            <person name="McIntosh T.C."/>
            <person name="McLeod M.P."/>
            <person name="McPherson D."/>
            <person name="Merkulov G."/>
            <person name="Milshina N.V."/>
            <person name="Mobarry C."/>
            <person name="Morris J."/>
            <person name="Moshrefi A."/>
            <person name="Mount S.M."/>
            <person name="Moy M."/>
            <person name="Murphy B."/>
            <person name="Murphy L."/>
            <person name="Muzny D.M."/>
            <person name="Nelson D.L."/>
            <person name="Nelson D.R."/>
            <person name="Nelson K.A."/>
            <person name="Nixon K."/>
            <person name="Nusskern D.R."/>
            <person name="Pacleb J.M."/>
            <person name="Palazzolo M."/>
            <person name="Pittman G.S."/>
            <person name="Pan S."/>
            <person name="Pollard J."/>
            <person name="Puri V."/>
            <person name="Reese M.G."/>
            <person name="Reinert K."/>
            <person name="Remington K."/>
            <person name="Saunders R.D.C."/>
            <person name="Scheeler F."/>
            <person name="Shen H."/>
            <person name="Shue B.C."/>
            <person name="Siden-Kiamos I."/>
            <person name="Simpson M."/>
            <person name="Skupski M.P."/>
            <person name="Smith T.J."/>
            <person name="Spier E."/>
            <person name="Spradling A.C."/>
            <person name="Stapleton M."/>
            <person name="Strong R."/>
            <person name="Sun E."/>
            <person name="Svirskas R."/>
            <person name="Tector C."/>
            <person name="Turner R."/>
            <person name="Venter E."/>
            <person name="Wang A.H."/>
            <person name="Wang X."/>
            <person name="Wang Z.-Y."/>
            <person name="Wassarman D.A."/>
            <person name="Weinstock G.M."/>
            <person name="Weissenbach J."/>
            <person name="Williams S.M."/>
            <person name="Woodage T."/>
            <person name="Worley K.C."/>
            <person name="Wu D."/>
            <person name="Yang S."/>
            <person name="Yao Q.A."/>
            <person name="Ye J."/>
            <person name="Yeh R.-F."/>
            <person name="Zaveri J.S."/>
            <person name="Zhan M."/>
            <person name="Zhang G."/>
            <person name="Zhao Q."/>
            <person name="Zheng L."/>
            <person name="Zheng X.H."/>
            <person name="Zhong F.N."/>
            <person name="Zhong W."/>
            <person name="Zhou X."/>
            <person name="Zhu S.C."/>
            <person name="Zhu X."/>
            <person name="Smith H.O."/>
            <person name="Gibbs R.A."/>
            <person name="Myers E.W."/>
            <person name="Rubin G.M."/>
            <person name="Venter J.C."/>
        </authorList>
    </citation>
    <scope>NUCLEOTIDE SEQUENCE [LARGE SCALE GENOMIC DNA]</scope>
    <source>
        <strain>Berkeley</strain>
    </source>
</reference>
<reference key="3">
    <citation type="journal article" date="2002" name="Genome Biol.">
        <title>Annotation of the Drosophila melanogaster euchromatic genome: a systematic review.</title>
        <authorList>
            <person name="Misra S."/>
            <person name="Crosby M.A."/>
            <person name="Mungall C.J."/>
            <person name="Matthews B.B."/>
            <person name="Campbell K.S."/>
            <person name="Hradecky P."/>
            <person name="Huang Y."/>
            <person name="Kaminker J.S."/>
            <person name="Millburn G.H."/>
            <person name="Prochnik S.E."/>
            <person name="Smith C.D."/>
            <person name="Tupy J.L."/>
            <person name="Whitfield E.J."/>
            <person name="Bayraktaroglu L."/>
            <person name="Berman B.P."/>
            <person name="Bettencourt B.R."/>
            <person name="Celniker S.E."/>
            <person name="de Grey A.D.N.J."/>
            <person name="Drysdale R.A."/>
            <person name="Harris N.L."/>
            <person name="Richter J."/>
            <person name="Russo S."/>
            <person name="Schroeder A.J."/>
            <person name="Shu S.Q."/>
            <person name="Stapleton M."/>
            <person name="Yamada C."/>
            <person name="Ashburner M."/>
            <person name="Gelbart W.M."/>
            <person name="Rubin G.M."/>
            <person name="Lewis S.E."/>
        </authorList>
    </citation>
    <scope>GENOME REANNOTATION</scope>
    <source>
        <strain>Berkeley</strain>
    </source>
</reference>